<dbReference type="EMBL" id="AC006201">
    <property type="protein sequence ID" value="AAD20120.1"/>
    <property type="molecule type" value="Genomic_DNA"/>
</dbReference>
<dbReference type="EMBL" id="CP002685">
    <property type="protein sequence ID" value="AEC06722.1"/>
    <property type="molecule type" value="Genomic_DNA"/>
</dbReference>
<dbReference type="EMBL" id="CP002685">
    <property type="protein sequence ID" value="ANM61740.1"/>
    <property type="molecule type" value="Genomic_DNA"/>
</dbReference>
<dbReference type="PIR" id="G84559">
    <property type="entry name" value="G84559"/>
</dbReference>
<dbReference type="RefSeq" id="NP_001318244.1">
    <property type="nucleotide sequence ID" value="NM_001335579.1"/>
</dbReference>
<dbReference type="RefSeq" id="NP_179397.1">
    <property type="nucleotide sequence ID" value="NM_127362.2"/>
</dbReference>
<dbReference type="SMR" id="Q9SL41"/>
<dbReference type="FunCoup" id="Q9SL41">
    <property type="interactions" value="343"/>
</dbReference>
<dbReference type="IntAct" id="Q9SL41">
    <property type="interactions" value="1"/>
</dbReference>
<dbReference type="STRING" id="3702.Q9SL41"/>
<dbReference type="PaxDb" id="3702-AT2G18060.1"/>
<dbReference type="ProteomicsDB" id="251192"/>
<dbReference type="EnsemblPlants" id="AT2G18060.1">
    <property type="protein sequence ID" value="AT2G18060.1"/>
    <property type="gene ID" value="AT2G18060"/>
</dbReference>
<dbReference type="EnsemblPlants" id="AT2G18060.3">
    <property type="protein sequence ID" value="AT2G18060.3"/>
    <property type="gene ID" value="AT2G18060"/>
</dbReference>
<dbReference type="GeneID" id="816318"/>
<dbReference type="Gramene" id="AT2G18060.1">
    <property type="protein sequence ID" value="AT2G18060.1"/>
    <property type="gene ID" value="AT2G18060"/>
</dbReference>
<dbReference type="Gramene" id="AT2G18060.3">
    <property type="protein sequence ID" value="AT2G18060.3"/>
    <property type="gene ID" value="AT2G18060"/>
</dbReference>
<dbReference type="KEGG" id="ath:AT2G18060"/>
<dbReference type="Araport" id="AT2G18060"/>
<dbReference type="TAIR" id="AT2G18060">
    <property type="gene designation" value="VND1"/>
</dbReference>
<dbReference type="eggNOG" id="ENOG502QQGU">
    <property type="taxonomic scope" value="Eukaryota"/>
</dbReference>
<dbReference type="HOGENOM" id="CLU_035664_1_2_1"/>
<dbReference type="InParanoid" id="Q9SL41"/>
<dbReference type="OMA" id="TKNTETW"/>
<dbReference type="OrthoDB" id="592291at2759"/>
<dbReference type="PhylomeDB" id="Q9SL41"/>
<dbReference type="PRO" id="PR:Q9SL41"/>
<dbReference type="Proteomes" id="UP000006548">
    <property type="component" value="Chromosome 2"/>
</dbReference>
<dbReference type="ExpressionAtlas" id="Q9SL41">
    <property type="expression patterns" value="baseline and differential"/>
</dbReference>
<dbReference type="GO" id="GO:0005634">
    <property type="term" value="C:nucleus"/>
    <property type="evidence" value="ECO:0007669"/>
    <property type="project" value="UniProtKB-SubCell"/>
</dbReference>
<dbReference type="GO" id="GO:0003700">
    <property type="term" value="F:DNA-binding transcription factor activity"/>
    <property type="evidence" value="ECO:0000250"/>
    <property type="project" value="UniProtKB"/>
</dbReference>
<dbReference type="GO" id="GO:0043565">
    <property type="term" value="F:sequence-specific DNA binding"/>
    <property type="evidence" value="ECO:0000250"/>
    <property type="project" value="UniProtKB"/>
</dbReference>
<dbReference type="GO" id="GO:0000976">
    <property type="term" value="F:transcription cis-regulatory region binding"/>
    <property type="evidence" value="ECO:0000353"/>
    <property type="project" value="TAIR"/>
</dbReference>
<dbReference type="GO" id="GO:1990110">
    <property type="term" value="P:callus formation"/>
    <property type="evidence" value="ECO:0000270"/>
    <property type="project" value="UniProtKB"/>
</dbReference>
<dbReference type="GO" id="GO:0071555">
    <property type="term" value="P:cell wall organization"/>
    <property type="evidence" value="ECO:0007669"/>
    <property type="project" value="UniProtKB-KW"/>
</dbReference>
<dbReference type="GO" id="GO:1901348">
    <property type="term" value="P:positive regulation of secondary cell wall biogenesis"/>
    <property type="evidence" value="ECO:0000315"/>
    <property type="project" value="TAIR"/>
</dbReference>
<dbReference type="GO" id="GO:0006355">
    <property type="term" value="P:regulation of DNA-templated transcription"/>
    <property type="evidence" value="ECO:0000315"/>
    <property type="project" value="TAIR"/>
</dbReference>
<dbReference type="GO" id="GO:0048759">
    <property type="term" value="P:xylem vessel member cell differentiation"/>
    <property type="evidence" value="ECO:0000315"/>
    <property type="project" value="TAIR"/>
</dbReference>
<dbReference type="FunFam" id="2.170.150.80:FF:000003">
    <property type="entry name" value="NAC domain-containing protein"/>
    <property type="match status" value="1"/>
</dbReference>
<dbReference type="Gene3D" id="2.170.150.80">
    <property type="entry name" value="NAC domain"/>
    <property type="match status" value="1"/>
</dbReference>
<dbReference type="InterPro" id="IPR003441">
    <property type="entry name" value="NAC-dom"/>
</dbReference>
<dbReference type="InterPro" id="IPR036093">
    <property type="entry name" value="NAC_dom_sf"/>
</dbReference>
<dbReference type="PANTHER" id="PTHR31744:SF236">
    <property type="entry name" value="NAC DOMAIN-CONTAINING PROTEIN 105"/>
    <property type="match status" value="1"/>
</dbReference>
<dbReference type="PANTHER" id="PTHR31744">
    <property type="entry name" value="PROTEIN CUP-SHAPED COTYLEDON 2-RELATED"/>
    <property type="match status" value="1"/>
</dbReference>
<dbReference type="Pfam" id="PF02365">
    <property type="entry name" value="NAM"/>
    <property type="match status" value="1"/>
</dbReference>
<dbReference type="SUPFAM" id="SSF101941">
    <property type="entry name" value="NAC domain"/>
    <property type="match status" value="1"/>
</dbReference>
<dbReference type="PROSITE" id="PS51005">
    <property type="entry name" value="NAC"/>
    <property type="match status" value="1"/>
</dbReference>
<reference key="1">
    <citation type="journal article" date="1999" name="Nature">
        <title>Sequence and analysis of chromosome 2 of the plant Arabidopsis thaliana.</title>
        <authorList>
            <person name="Lin X."/>
            <person name="Kaul S."/>
            <person name="Rounsley S.D."/>
            <person name="Shea T.P."/>
            <person name="Benito M.-I."/>
            <person name="Town C.D."/>
            <person name="Fujii C.Y."/>
            <person name="Mason T.M."/>
            <person name="Bowman C.L."/>
            <person name="Barnstead M.E."/>
            <person name="Feldblyum T.V."/>
            <person name="Buell C.R."/>
            <person name="Ketchum K.A."/>
            <person name="Lee J.J."/>
            <person name="Ronning C.M."/>
            <person name="Koo H.L."/>
            <person name="Moffat K.S."/>
            <person name="Cronin L.A."/>
            <person name="Shen M."/>
            <person name="Pai G."/>
            <person name="Van Aken S."/>
            <person name="Umayam L."/>
            <person name="Tallon L.J."/>
            <person name="Gill J.E."/>
            <person name="Adams M.D."/>
            <person name="Carrera A.J."/>
            <person name="Creasy T.H."/>
            <person name="Goodman H.M."/>
            <person name="Somerville C.R."/>
            <person name="Copenhaver G.P."/>
            <person name="Preuss D."/>
            <person name="Nierman W.C."/>
            <person name="White O."/>
            <person name="Eisen J.A."/>
            <person name="Salzberg S.L."/>
            <person name="Fraser C.M."/>
            <person name="Venter J.C."/>
        </authorList>
    </citation>
    <scope>NUCLEOTIDE SEQUENCE [LARGE SCALE GENOMIC DNA]</scope>
    <source>
        <strain>cv. Columbia</strain>
    </source>
</reference>
<reference key="2">
    <citation type="journal article" date="2017" name="Plant J.">
        <title>Araport11: a complete reannotation of the Arabidopsis thaliana reference genome.</title>
        <authorList>
            <person name="Cheng C.Y."/>
            <person name="Krishnakumar V."/>
            <person name="Chan A.P."/>
            <person name="Thibaud-Nissen F."/>
            <person name="Schobel S."/>
            <person name="Town C.D."/>
        </authorList>
    </citation>
    <scope>GENOME REANNOTATION</scope>
    <source>
        <strain>cv. Columbia</strain>
    </source>
</reference>
<reference key="3">
    <citation type="journal article" date="2003" name="DNA Res.">
        <title>Comprehensive analysis of NAC family genes in Oryza sativa and Arabidopsis thaliana.</title>
        <authorList>
            <person name="Ooka H."/>
            <person name="Satoh K."/>
            <person name="Doi K."/>
            <person name="Nagata T."/>
            <person name="Otomo Y."/>
            <person name="Murakami K."/>
            <person name="Matsubara K."/>
            <person name="Osato N."/>
            <person name="Kawai J."/>
            <person name="Carninci P."/>
            <person name="Hayashizaki Y."/>
            <person name="Suzuki K."/>
            <person name="Kojima K."/>
            <person name="Takahara Y."/>
            <person name="Yamamoto K."/>
            <person name="Kikuchi S."/>
        </authorList>
    </citation>
    <scope>GENE FAMILY</scope>
    <scope>NOMENCLATURE</scope>
</reference>
<reference key="4">
    <citation type="journal article" date="2005" name="Genes Dev.">
        <title>Transcription switches for protoxylem and metaxylem vessel formation.</title>
        <authorList>
            <person name="Kubo M."/>
            <person name="Udagawa M."/>
            <person name="Nishikubo N."/>
            <person name="Horiguchi G."/>
            <person name="Yamaguchi M."/>
            <person name="Ito J."/>
            <person name="Mimura T."/>
            <person name="Fukuda H."/>
            <person name="Demura T."/>
        </authorList>
    </citation>
    <scope>DEVELOPMENTAL STAGE</scope>
    <scope>TISSUE SPECIFICITY</scope>
    <scope>GENE FAMILY</scope>
    <scope>NOMENCLATURE</scope>
</reference>
<reference key="5">
    <citation type="journal article" date="2007" name="Mol. Plant Microbe Interact.">
        <title>Identification of 118 Arabidopsis transcription factor and 30 ubiquitin-ligase genes responding to chitin, a plant-defense elicitor.</title>
        <authorList>
            <person name="Libault M."/>
            <person name="Wan J."/>
            <person name="Czechowski T."/>
            <person name="Udvardi M."/>
            <person name="Stacey G."/>
        </authorList>
    </citation>
    <scope>INDUCTION BY CHITIN</scope>
</reference>
<reference key="6">
    <citation type="journal article" date="2007" name="Planta">
        <title>Developmental steps in acquiring competence for shoot development in Arabidopsis tissue culture.</title>
        <authorList>
            <person name="Che P."/>
            <person name="Lall S."/>
            <person name="Howell S.H."/>
        </authorList>
    </citation>
    <scope>INDUCTION BY CALLUS INDUCTION MEDIUM</scope>
</reference>
<reference key="7">
    <citation type="journal article" date="2008" name="Plant J.">
        <title>Vascular-related NAC-DOMAIN7 is involved in the differentiation of all types of xylem vessels in Arabidopsis roots and shoots.</title>
        <authorList>
            <person name="Yamaguchi M."/>
            <person name="Kubo M."/>
            <person name="Fukuda H."/>
            <person name="Demura T."/>
        </authorList>
    </citation>
    <scope>TISSUE SPECIFICITY</scope>
    <scope>INTERACTION WITH NAC030/VND7</scope>
    <source>
        <strain>cv. Columbia</strain>
    </source>
</reference>
<reference key="8">
    <citation type="journal article" date="2014" name="PLoS ONE">
        <title>Arabidopsis NAC domain proteins, VND1 to VND5, are transcriptional regulators of secondary wall biosynthesis in vessels.</title>
        <authorList>
            <person name="Zhou J."/>
            <person name="Zhong R."/>
            <person name="Ye Z.-H."/>
        </authorList>
    </citation>
    <scope>FUNCTION</scope>
    <scope>TISSUE SPECIFICITY</scope>
    <scope>DEVELOPMENTAL STAGE</scope>
</reference>
<keyword id="KW-0010">Activator</keyword>
<keyword id="KW-0961">Cell wall biogenesis/degradation</keyword>
<keyword id="KW-0217">Developmental protein</keyword>
<keyword id="KW-0238">DNA-binding</keyword>
<keyword id="KW-0539">Nucleus</keyword>
<keyword id="KW-1185">Reference proteome</keyword>
<keyword id="KW-0804">Transcription</keyword>
<keyword id="KW-0805">Transcription regulation</keyword>
<protein>
    <recommendedName>
        <fullName evidence="9">NAC domain-containing protein 37</fullName>
        <shortName evidence="9">ANAC037</shortName>
    </recommendedName>
    <alternativeName>
        <fullName evidence="10">Protein VASCULAR RELATED NAC-DOMAIN 1</fullName>
    </alternativeName>
</protein>
<sequence>MEPMESCSVPPGFRFHPTDEELVGYYLRKKIASQKIDLDVIRDIDLYRIEPWDLQEQCRIGYEEQNEWYFFSHKDKKYPTGTRTNRATMAGFWKATGRDKAVYDKTKLIGMRKTLVFYKGRAPNGKKSDWIMHEYRLESDENAPPQEEGWVVCRAFKKRATGQAKNTETWSSSYFYDEVAPNGVNSVMDPIDYISKQQHNIFGKGLMCKQELEGMVDGINYIQSNQFIQLPQLQSPSLPLMKRPSSSMSITSMDNNYNYKLPLADEESFESFIRGEDRRKKKKQVMMTGNWRELDKFVASQLMSQEDNGTSSFAGHHIVNEDKNNNDVEMDSSMFLSEREEENRFVSEFLSTNSDYDIGICVFDN</sequence>
<feature type="chain" id="PRO_0000433121" description="NAC domain-containing protein 37">
    <location>
        <begin position="1"/>
        <end position="365"/>
    </location>
</feature>
<feature type="domain" description="NAC" evidence="3">
    <location>
        <begin position="9"/>
        <end position="158"/>
    </location>
</feature>
<feature type="DNA-binding region" evidence="3">
    <location>
        <begin position="109"/>
        <end position="164"/>
    </location>
</feature>
<gene>
    <name evidence="9" type="primary">NAC037</name>
    <name evidence="10" type="synonym">VND1</name>
    <name evidence="12" type="ordered locus">At2g18060</name>
    <name evidence="13" type="ORF">T27K22.7</name>
</gene>
<proteinExistence type="evidence at protein level"/>
<comment type="function">
    <text evidence="2 8">Transcription activator that binds to the secondary wall NAC binding element (SNBE), 5'-(T/A)NN(C/T)(T/C/G)TNNNNNNNA(A/C)GN(A/C/T)(A/T)-3', in the promoter of target genes (By similarity). Involved in xylem formation by promoting the expression of secondary wall-associated transcription factors and of genes involved in secondary wall biosynthesis and programmed cell death, genes driven by the secondary wall NAC binding element (SNBE). Triggers thickening of secondary walls (PubMed:25148240).</text>
</comment>
<comment type="subunit">
    <text evidence="4 7">Interacts with NAC030/VND7.</text>
</comment>
<comment type="subcellular location">
    <subcellularLocation>
        <location evidence="1 3">Nucleus</location>
    </subcellularLocation>
</comment>
<comment type="tissue specificity">
    <text evidence="4 7 8">Expressed in root metaxylem pole and in shoot pre-procambium and procambium (PubMed:18445131). Present in root developing xylems (PubMed:16103214). Specifically expressed in vessels but not in interfascicular fibers in stems (PubMed:25148240).</text>
</comment>
<comment type="developmental stage">
    <text evidence="4 8">Up-regulated during xylem vessel element formation. Expressed preferentially in procambial cells adjacent to root meristem.</text>
</comment>
<comment type="induction">
    <text evidence="5 6">Induced by chitin (e.g. chitooctaose) (PubMed:17722694). Accumulates in plants exposed to callus induction medium (CIM) (PubMed:17581762).</text>
</comment>
<comment type="domain">
    <text evidence="3">The NAC domain includes a DNA binding domain and a dimerization domain.</text>
</comment>
<comment type="similarity">
    <text evidence="11">Belongs to the plant vascular related NAC-domain protein family.</text>
</comment>
<name>NAC37_ARATH</name>
<accession>Q9SL41</accession>
<organism evidence="14">
    <name type="scientific">Arabidopsis thaliana</name>
    <name type="common">Mouse-ear cress</name>
    <dbReference type="NCBI Taxonomy" id="3702"/>
    <lineage>
        <taxon>Eukaryota</taxon>
        <taxon>Viridiplantae</taxon>
        <taxon>Streptophyta</taxon>
        <taxon>Embryophyta</taxon>
        <taxon>Tracheophyta</taxon>
        <taxon>Spermatophyta</taxon>
        <taxon>Magnoliopsida</taxon>
        <taxon>eudicotyledons</taxon>
        <taxon>Gunneridae</taxon>
        <taxon>Pentapetalae</taxon>
        <taxon>rosids</taxon>
        <taxon>malvids</taxon>
        <taxon>Brassicales</taxon>
        <taxon>Brassicaceae</taxon>
        <taxon>Camelineae</taxon>
        <taxon>Arabidopsis</taxon>
    </lineage>
</organism>
<evidence type="ECO:0000250" key="1">
    <source>
        <dbReference type="UniProtKB" id="Q9C8W9"/>
    </source>
</evidence>
<evidence type="ECO:0000250" key="2">
    <source>
        <dbReference type="UniProtKB" id="Q9LVA1"/>
    </source>
</evidence>
<evidence type="ECO:0000255" key="3">
    <source>
        <dbReference type="PROSITE-ProRule" id="PRU00353"/>
    </source>
</evidence>
<evidence type="ECO:0000269" key="4">
    <source>
    </source>
</evidence>
<evidence type="ECO:0000269" key="5">
    <source>
    </source>
</evidence>
<evidence type="ECO:0000269" key="6">
    <source>
    </source>
</evidence>
<evidence type="ECO:0000269" key="7">
    <source>
    </source>
</evidence>
<evidence type="ECO:0000269" key="8">
    <source>
    </source>
</evidence>
<evidence type="ECO:0000303" key="9">
    <source>
    </source>
</evidence>
<evidence type="ECO:0000303" key="10">
    <source>
    </source>
</evidence>
<evidence type="ECO:0000305" key="11"/>
<evidence type="ECO:0000312" key="12">
    <source>
        <dbReference type="Araport" id="AT2G18060"/>
    </source>
</evidence>
<evidence type="ECO:0000312" key="13">
    <source>
        <dbReference type="EMBL" id="AAD20120.1"/>
    </source>
</evidence>
<evidence type="ECO:0000312" key="14">
    <source>
        <dbReference type="Proteomes" id="UP000006548"/>
    </source>
</evidence>